<gene>
    <name evidence="7" type="primary">rodA</name>
    <name type="ORF">PCAMFM013_S018g000104</name>
</gene>
<reference key="1">
    <citation type="journal article" date="2014" name="Nat. Commun.">
        <title>Multiple recent horizontal transfers of a large genomic region in cheese making fungi.</title>
        <authorList>
            <person name="Cheeseman K."/>
            <person name="Ropars J."/>
            <person name="Renault P."/>
            <person name="Dupont J."/>
            <person name="Gouzy J."/>
            <person name="Branca A."/>
            <person name="Abraham A.-L."/>
            <person name="Ceppi M."/>
            <person name="Conseiller E."/>
            <person name="Debuchy R."/>
            <person name="Malagnac F."/>
            <person name="Goarin A."/>
            <person name="Silar P."/>
            <person name="Lacoste S."/>
            <person name="Sallet E."/>
            <person name="Bensimon A."/>
            <person name="Giraud T."/>
            <person name="Brygoo Y."/>
        </authorList>
    </citation>
    <scope>NUCLEOTIDE SEQUENCE [LARGE SCALE GENOMIC DNA]</scope>
    <source>
        <strain>FM 013</strain>
    </source>
</reference>
<reference key="2">
    <citation type="journal article" date="2008" name="Res. Microbiol.">
        <title>Cloning and expression of genes involved in conidiation and surface properties of Penicillium camemberti grown in liquid and solid cultures.</title>
        <authorList>
            <person name="Boualem K."/>
            <person name="Wache Y."/>
            <person name="Garmyn D."/>
            <person name="Karbowiak T."/>
            <person name="Durand A."/>
            <person name="Gervais P."/>
            <person name="Cavin J.F."/>
        </authorList>
    </citation>
    <scope>FUNCTION</scope>
    <scope>INDUCTION</scope>
    <scope>SUBCELLULAR LOCATION</scope>
</reference>
<reference key="3">
    <citation type="journal article" date="2009" name="Nature">
        <title>Surface hydrophobin prevents immune recognition of airborne fungal spores.</title>
        <authorList>
            <person name="Aimanianda V."/>
            <person name="Bayry J."/>
            <person name="Bozza S."/>
            <person name="Kniemeyer O."/>
            <person name="Perruccio K."/>
            <person name="Elluru S.R."/>
            <person name="Clavaud C."/>
            <person name="Paris S."/>
            <person name="Brakhage A.A."/>
            <person name="Kaveri S.V."/>
            <person name="Romani L."/>
            <person name="Latge J.P."/>
        </authorList>
    </citation>
    <scope>FUNCTION</scope>
    <scope>SUBCELLULAR LOCATION</scope>
</reference>
<reference key="4">
    <citation type="journal article" date="2016" name="Biotechnol. Lett.">
        <title>Conidiation of Penicillium camemberti in submerged liquid cultures is dependent on the nitrogen source.</title>
        <authorList>
            <person name="Boualem K."/>
            <person name="Labrie S."/>
            <person name="Gervais P."/>
            <person name="Wache Y."/>
            <person name="Cavin J.F."/>
        </authorList>
    </citation>
    <scope>INDUCTION</scope>
</reference>
<proteinExistence type="evidence at transcript level"/>
<accession>A0A0G4PJR9</accession>
<keyword id="KW-0134">Cell wall</keyword>
<keyword id="KW-1015">Disulfide bond</keyword>
<keyword id="KW-0325">Glycoprotein</keyword>
<keyword id="KW-1185">Reference proteome</keyword>
<keyword id="KW-0964">Secreted</keyword>
<keyword id="KW-0732">Signal</keyword>
<name>RODA_PENC3</name>
<sequence length="164" mass="16341">MQFSISALVLGLAATVYALPPGAPSAGGAGSGNGVGNKGNTDVRFSVPDNMTVKQAQAKCGDQAQLSCCNKAVYAGDTTDINSGILGGTLSNLIGSGSGASGLGLFDQCSKLDLQIPVLIGIPIQDLINQKCKQNIACCQNSPSSANSDLIGLGLPCVALGSIL</sequence>
<organism>
    <name type="scientific">Penicillium camemberti (strain FM 013)</name>
    <dbReference type="NCBI Taxonomy" id="1429867"/>
    <lineage>
        <taxon>Eukaryota</taxon>
        <taxon>Fungi</taxon>
        <taxon>Dikarya</taxon>
        <taxon>Ascomycota</taxon>
        <taxon>Pezizomycotina</taxon>
        <taxon>Eurotiomycetes</taxon>
        <taxon>Eurotiomycetidae</taxon>
        <taxon>Eurotiales</taxon>
        <taxon>Aspergillaceae</taxon>
        <taxon>Penicillium</taxon>
    </lineage>
</organism>
<dbReference type="EMBL" id="HG793151">
    <property type="protein sequence ID" value="CRL26411.1"/>
    <property type="molecule type" value="Genomic_DNA"/>
</dbReference>
<dbReference type="Proteomes" id="UP000053732">
    <property type="component" value="Unassembled WGS sequence"/>
</dbReference>
<dbReference type="GO" id="GO:0005576">
    <property type="term" value="C:extracellular region"/>
    <property type="evidence" value="ECO:0007669"/>
    <property type="project" value="UniProtKB-KW"/>
</dbReference>
<dbReference type="GO" id="GO:0009277">
    <property type="term" value="C:fungal-type cell wall"/>
    <property type="evidence" value="ECO:0007669"/>
    <property type="project" value="InterPro"/>
</dbReference>
<dbReference type="GO" id="GO:0005199">
    <property type="term" value="F:structural constituent of cell wall"/>
    <property type="evidence" value="ECO:0007669"/>
    <property type="project" value="InterPro"/>
</dbReference>
<dbReference type="InterPro" id="IPR001338">
    <property type="entry name" value="Hydrophobin"/>
</dbReference>
<dbReference type="InterPro" id="IPR019778">
    <property type="entry name" value="Hydrophobin_CS"/>
</dbReference>
<dbReference type="Pfam" id="PF01185">
    <property type="entry name" value="Hydrophobin"/>
    <property type="match status" value="1"/>
</dbReference>
<dbReference type="SMART" id="SM00075">
    <property type="entry name" value="HYDRO"/>
    <property type="match status" value="1"/>
</dbReference>
<dbReference type="PROSITE" id="PS00956">
    <property type="entry name" value="HYDROPHOBIN"/>
    <property type="match status" value="1"/>
</dbReference>
<protein>
    <recommendedName>
        <fullName evidence="7">Class I hydrophobin rodA</fullName>
    </recommendedName>
    <alternativeName>
        <fullName evidence="7">Rodlet protein A</fullName>
    </alternativeName>
</protein>
<evidence type="ECO:0000250" key="1">
    <source>
        <dbReference type="UniProtKB" id="Q04571"/>
    </source>
</evidence>
<evidence type="ECO:0000255" key="2"/>
<evidence type="ECO:0000255" key="3">
    <source>
        <dbReference type="PROSITE-ProRule" id="PRU00498"/>
    </source>
</evidence>
<evidence type="ECO:0000269" key="4">
    <source>
    </source>
</evidence>
<evidence type="ECO:0000269" key="5">
    <source>
    </source>
</evidence>
<evidence type="ECO:0000269" key="6">
    <source>
    </source>
</evidence>
<evidence type="ECO:0000303" key="7">
    <source>
    </source>
</evidence>
<evidence type="ECO:0000305" key="8"/>
<comment type="function">
    <text evidence="4 5 8">Aerial growth, conidiation, and dispersal of filamentous fungi in the environment rely upon a capability of their secreting small amphipathic proteins called hydrophobins (HPBs) with low sequence identity. Class I can self-assemble into an outermost layer of rodlet bundles on aerial cell surfaces, conferring cellular hydrophobicity that supports fungal growth, development and dispersal; whereas Class II form highly ordered films at water-air interfaces through intermolecular interactions but contribute nothing to the rodlet structure (Probable). RodA is a class I hydrophobin involved in the cell surface hydrophobicity (PubMed:18093806). The surface rodlet layer of the conidial cell wall makes airborne conidia of filamentous fungi inert to both innate and adaptive immunity (PubMed:19713928).</text>
</comment>
<comment type="subunit">
    <text evidence="1">Self-assembles to form functional amyloid fibrils called rodlets. Self-assembly into fibrillar rodlets occurs spontaneously at hydrophobic:hydrophilic interfaces and the rodlets further associate laterally to form amphipathic monolayers.</text>
</comment>
<comment type="subcellular location">
    <subcellularLocation>
        <location evidence="4 5">Secreted</location>
    </subcellularLocation>
    <subcellularLocation>
        <location evidence="4 5">Secreted</location>
        <location evidence="4 5">Cell wall</location>
    </subcellularLocation>
</comment>
<comment type="induction">
    <text evidence="4 6">Expression is repressed during growth in liquids, whereas several days of growth under aerial conditions of solid culture induces expression.</text>
</comment>
<comment type="similarity">
    <text evidence="8">Belongs to the fungal hydrophobin family.</text>
</comment>
<feature type="signal peptide" evidence="2">
    <location>
        <begin position="1"/>
        <end position="18"/>
    </location>
</feature>
<feature type="chain" id="PRO_5013985681" description="Class I hydrophobin rodA">
    <location>
        <begin position="19"/>
        <end position="164"/>
    </location>
</feature>
<feature type="glycosylation site" description="N-linked (GlcNAc...) asparagine" evidence="3">
    <location>
        <position position="50"/>
    </location>
</feature>
<feature type="disulfide bond" evidence="1">
    <location>
        <begin position="60"/>
        <end position="138"/>
    </location>
</feature>
<feature type="disulfide bond" evidence="1">
    <location>
        <begin position="68"/>
        <end position="132"/>
    </location>
</feature>
<feature type="disulfide bond" evidence="1">
    <location>
        <begin position="69"/>
        <end position="109"/>
    </location>
</feature>
<feature type="disulfide bond" evidence="1">
    <location>
        <begin position="139"/>
        <end position="157"/>
    </location>
</feature>